<feature type="chain" id="PRO_0000247162" description="Uncharacterized protein YLR307C-A">
    <location>
        <begin position="1"/>
        <end position="87"/>
    </location>
</feature>
<gene>
    <name type="ordered locus">YLR307C-A</name>
</gene>
<sequence length="87" mass="9633">MSLRNISMITKNLQTTAKCYVPKSSPTSTTIPVIRDASTTQCRRITTVINITSLKGYSPSPRTVHDKPIVICTDNEEVETVSEHVKV</sequence>
<name>YL307_YEAST</name>
<accession>Q3E825</accession>
<accession>D6VYV1</accession>
<dbReference type="EMBL" id="U17247">
    <property type="status" value="NOT_ANNOTATED_CDS"/>
    <property type="molecule type" value="Genomic_DNA"/>
</dbReference>
<dbReference type="EMBL" id="BK006945">
    <property type="protein sequence ID" value="DAA09617.1"/>
    <property type="molecule type" value="Genomic_DNA"/>
</dbReference>
<dbReference type="BioGRID" id="36961">
    <property type="interactions" value="48"/>
</dbReference>
<dbReference type="STRING" id="4932.YLR307C-A"/>
<dbReference type="PaxDb" id="4932-YLR307C-A"/>
<dbReference type="PeptideAtlas" id="Q3E825"/>
<dbReference type="EnsemblFungi" id="YLR307C-A_mRNA">
    <property type="protein sequence ID" value="YLR307C-A"/>
    <property type="gene ID" value="YLR307C-A"/>
</dbReference>
<dbReference type="KEGG" id="sce:YLR307C-A"/>
<dbReference type="AGR" id="SGD:S000028525"/>
<dbReference type="SGD" id="S000028525">
    <property type="gene designation" value="YLR307C-A"/>
</dbReference>
<dbReference type="VEuPathDB" id="FungiDB:YLR307C-A"/>
<dbReference type="HOGENOM" id="CLU_2484586_0_0_1"/>
<dbReference type="InParanoid" id="Q3E825"/>
<dbReference type="OrthoDB" id="4056530at2759"/>
<dbReference type="BioCyc" id="YEAST:G3O-32573-MONOMER"/>
<dbReference type="BioGRID-ORCS" id="1466419">
    <property type="hits" value="0 hits in 10 CRISPR screens"/>
</dbReference>
<dbReference type="PRO" id="PR:Q3E825"/>
<dbReference type="Proteomes" id="UP000002311">
    <property type="component" value="Chromosome XII"/>
</dbReference>
<dbReference type="RNAct" id="Q3E825">
    <property type="molecule type" value="protein"/>
</dbReference>
<keyword id="KW-1185">Reference proteome</keyword>
<proteinExistence type="predicted"/>
<reference key="1">
    <citation type="journal article" date="1997" name="Nature">
        <title>The nucleotide sequence of Saccharomyces cerevisiae chromosome XII.</title>
        <authorList>
            <person name="Johnston M."/>
            <person name="Hillier L.W."/>
            <person name="Riles L."/>
            <person name="Albermann K."/>
            <person name="Andre B."/>
            <person name="Ansorge W."/>
            <person name="Benes V."/>
            <person name="Brueckner M."/>
            <person name="Delius H."/>
            <person name="Dubois E."/>
            <person name="Duesterhoeft A."/>
            <person name="Entian K.-D."/>
            <person name="Floeth M."/>
            <person name="Goffeau A."/>
            <person name="Hebling U."/>
            <person name="Heumann K."/>
            <person name="Heuss-Neitzel D."/>
            <person name="Hilbert H."/>
            <person name="Hilger F."/>
            <person name="Kleine K."/>
            <person name="Koetter P."/>
            <person name="Louis E.J."/>
            <person name="Messenguy F."/>
            <person name="Mewes H.-W."/>
            <person name="Miosga T."/>
            <person name="Moestl D."/>
            <person name="Mueller-Auer S."/>
            <person name="Nentwich U."/>
            <person name="Obermaier B."/>
            <person name="Piravandi E."/>
            <person name="Pohl T.M."/>
            <person name="Portetelle D."/>
            <person name="Purnelle B."/>
            <person name="Rechmann S."/>
            <person name="Rieger M."/>
            <person name="Rinke M."/>
            <person name="Rose M."/>
            <person name="Scharfe M."/>
            <person name="Scherens B."/>
            <person name="Scholler P."/>
            <person name="Schwager C."/>
            <person name="Schwarz S."/>
            <person name="Underwood A.P."/>
            <person name="Urrestarazu L.A."/>
            <person name="Vandenbol M."/>
            <person name="Verhasselt P."/>
            <person name="Vierendeels F."/>
            <person name="Voet M."/>
            <person name="Volckaert G."/>
            <person name="Voss H."/>
            <person name="Wambutt R."/>
            <person name="Wedler E."/>
            <person name="Wedler H."/>
            <person name="Zimmermann F.K."/>
            <person name="Zollner A."/>
            <person name="Hani J."/>
            <person name="Hoheisel J.D."/>
        </authorList>
    </citation>
    <scope>NUCLEOTIDE SEQUENCE [LARGE SCALE GENOMIC DNA]</scope>
    <source>
        <strain>ATCC 204508 / S288c</strain>
    </source>
</reference>
<reference key="2">
    <citation type="journal article" date="2014" name="G3 (Bethesda)">
        <title>The reference genome sequence of Saccharomyces cerevisiae: Then and now.</title>
        <authorList>
            <person name="Engel S.R."/>
            <person name="Dietrich F.S."/>
            <person name="Fisk D.G."/>
            <person name="Binkley G."/>
            <person name="Balakrishnan R."/>
            <person name="Costanzo M.C."/>
            <person name="Dwight S.S."/>
            <person name="Hitz B.C."/>
            <person name="Karra K."/>
            <person name="Nash R.S."/>
            <person name="Weng S."/>
            <person name="Wong E.D."/>
            <person name="Lloyd P."/>
            <person name="Skrzypek M.S."/>
            <person name="Miyasato S.R."/>
            <person name="Simison M."/>
            <person name="Cherry J.M."/>
        </authorList>
    </citation>
    <scope>GENOME REANNOTATION</scope>
    <source>
        <strain>ATCC 204508 / S288c</strain>
    </source>
</reference>
<reference key="3">
    <citation type="journal article" date="2003" name="Genome Biol.">
        <title>Reinvestigation of the Saccharomyces cerevisiae genome annotation by comparison to the genome of a related fungus: Ashbya gossypii.</title>
        <authorList>
            <person name="Brachat S."/>
            <person name="Dietrich F.S."/>
            <person name="Voegeli S."/>
            <person name="Zhang Z."/>
            <person name="Stuart L."/>
            <person name="Lerch A."/>
            <person name="Gates K."/>
            <person name="Gaffney T.D."/>
            <person name="Philippsen P."/>
        </authorList>
    </citation>
    <scope>GENOME REANNOTATION</scope>
    <source>
        <strain>ATCC 204511 / S288c / AB972</strain>
    </source>
</reference>
<organism>
    <name type="scientific">Saccharomyces cerevisiae (strain ATCC 204508 / S288c)</name>
    <name type="common">Baker's yeast</name>
    <dbReference type="NCBI Taxonomy" id="559292"/>
    <lineage>
        <taxon>Eukaryota</taxon>
        <taxon>Fungi</taxon>
        <taxon>Dikarya</taxon>
        <taxon>Ascomycota</taxon>
        <taxon>Saccharomycotina</taxon>
        <taxon>Saccharomycetes</taxon>
        <taxon>Saccharomycetales</taxon>
        <taxon>Saccharomycetaceae</taxon>
        <taxon>Saccharomyces</taxon>
    </lineage>
</organism>
<protein>
    <recommendedName>
        <fullName>Uncharacterized protein YLR307C-A</fullName>
    </recommendedName>
</protein>